<feature type="chain" id="PRO_0000275051" description="NADH-ubiquinone oxidoreductase chain 4L">
    <location>
        <begin position="1"/>
        <end position="98"/>
    </location>
</feature>
<feature type="transmembrane region" description="Helical" evidence="3">
    <location>
        <begin position="1"/>
        <end position="21"/>
    </location>
</feature>
<feature type="transmembrane region" description="Helical" evidence="3">
    <location>
        <begin position="27"/>
        <end position="47"/>
    </location>
</feature>
<feature type="transmembrane region" description="Helical" evidence="3">
    <location>
        <begin position="61"/>
        <end position="81"/>
    </location>
</feature>
<name>NU4LM_MACSY</name>
<organism>
    <name type="scientific">Macaca sylvanus</name>
    <name type="common">Barbary macaque</name>
    <dbReference type="NCBI Taxonomy" id="9546"/>
    <lineage>
        <taxon>Eukaryota</taxon>
        <taxon>Metazoa</taxon>
        <taxon>Chordata</taxon>
        <taxon>Craniata</taxon>
        <taxon>Vertebrata</taxon>
        <taxon>Euteleostomi</taxon>
        <taxon>Mammalia</taxon>
        <taxon>Eutheria</taxon>
        <taxon>Euarchontoglires</taxon>
        <taxon>Primates</taxon>
        <taxon>Haplorrhini</taxon>
        <taxon>Catarrhini</taxon>
        <taxon>Cercopithecidae</taxon>
        <taxon>Cercopithecinae</taxon>
        <taxon>Macaca</taxon>
    </lineage>
</organism>
<dbReference type="EC" id="7.1.1.2"/>
<dbReference type="EMBL" id="AF091400">
    <property type="protein sequence ID" value="AAD24688.1"/>
    <property type="molecule type" value="Genomic_DNA"/>
</dbReference>
<dbReference type="SMR" id="Q9XL36"/>
<dbReference type="GO" id="GO:0005743">
    <property type="term" value="C:mitochondrial inner membrane"/>
    <property type="evidence" value="ECO:0000250"/>
    <property type="project" value="UniProtKB"/>
</dbReference>
<dbReference type="GO" id="GO:0045271">
    <property type="term" value="C:respiratory chain complex I"/>
    <property type="evidence" value="ECO:0000250"/>
    <property type="project" value="UniProtKB"/>
</dbReference>
<dbReference type="GO" id="GO:0008137">
    <property type="term" value="F:NADH dehydrogenase (ubiquinone) activity"/>
    <property type="evidence" value="ECO:0000250"/>
    <property type="project" value="UniProtKB"/>
</dbReference>
<dbReference type="GO" id="GO:0042773">
    <property type="term" value="P:ATP synthesis coupled electron transport"/>
    <property type="evidence" value="ECO:0007669"/>
    <property type="project" value="InterPro"/>
</dbReference>
<dbReference type="FunFam" id="1.10.287.3510:FF:000002">
    <property type="entry name" value="NADH-ubiquinone oxidoreductase chain 4L"/>
    <property type="match status" value="1"/>
</dbReference>
<dbReference type="Gene3D" id="1.10.287.3510">
    <property type="match status" value="1"/>
</dbReference>
<dbReference type="InterPro" id="IPR001133">
    <property type="entry name" value="NADH_UbQ_OxRdtase_chain4L/K"/>
</dbReference>
<dbReference type="InterPro" id="IPR039428">
    <property type="entry name" value="NUOK/Mnh_C1-like"/>
</dbReference>
<dbReference type="PANTHER" id="PTHR11434:SF0">
    <property type="entry name" value="NADH-UBIQUINONE OXIDOREDUCTASE CHAIN 4L"/>
    <property type="match status" value="1"/>
</dbReference>
<dbReference type="PANTHER" id="PTHR11434">
    <property type="entry name" value="NADH-UBIQUINONE OXIDOREDUCTASE SUBUNIT ND4L"/>
    <property type="match status" value="1"/>
</dbReference>
<dbReference type="Pfam" id="PF00420">
    <property type="entry name" value="Oxidored_q2"/>
    <property type="match status" value="1"/>
</dbReference>
<sequence length="98" mass="10707">MIPTYMNIMLAFTISLLGMLTYRSHLVASLLCLEGMTMSLFIMTALIASNTHSPLINIMPIILLVFAACEAAVGLALLISISNTYGLDYIHNLNLLQC</sequence>
<geneLocation type="mitochondrion"/>
<reference key="1">
    <citation type="journal article" date="1999" name="Biol. J. Linn. Soc. Lond.">
        <title>Origin of the Sulawesi macaques (Cercopithecidae: Macaca) as suggested by mitochondrial DNA phylogeny.</title>
        <authorList>
            <person name="Evans B.J."/>
            <person name="Morales J.C."/>
            <person name="Supriatna J."/>
            <person name="Melnick D.J."/>
        </authorList>
    </citation>
    <scope>NUCLEOTIDE SEQUENCE [GENOMIC DNA]</scope>
</reference>
<proteinExistence type="inferred from homology"/>
<comment type="function">
    <text evidence="1">Core subunit of the mitochondrial membrane respiratory chain NADH dehydrogenase (Complex I) which catalyzes electron transfer from NADH through the respiratory chain, using ubiquinone as an electron acceptor. Part of the enzyme membrane arm which is embedded in the lipid bilayer and involved in proton translocation.</text>
</comment>
<comment type="catalytic activity">
    <reaction evidence="1">
        <text>a ubiquinone + NADH + 5 H(+)(in) = a ubiquinol + NAD(+) + 4 H(+)(out)</text>
        <dbReference type="Rhea" id="RHEA:29091"/>
        <dbReference type="Rhea" id="RHEA-COMP:9565"/>
        <dbReference type="Rhea" id="RHEA-COMP:9566"/>
        <dbReference type="ChEBI" id="CHEBI:15378"/>
        <dbReference type="ChEBI" id="CHEBI:16389"/>
        <dbReference type="ChEBI" id="CHEBI:17976"/>
        <dbReference type="ChEBI" id="CHEBI:57540"/>
        <dbReference type="ChEBI" id="CHEBI:57945"/>
        <dbReference type="EC" id="7.1.1.2"/>
    </reaction>
    <physiologicalReaction direction="left-to-right" evidence="1">
        <dbReference type="Rhea" id="RHEA:29092"/>
    </physiologicalReaction>
</comment>
<comment type="subunit">
    <text evidence="2">Core subunit of respiratory chain NADH dehydrogenase (Complex I) which is composed of 45 different subunits.</text>
</comment>
<comment type="subcellular location">
    <subcellularLocation>
        <location evidence="2">Mitochondrion inner membrane</location>
        <topology evidence="3">Multi-pass membrane protein</topology>
    </subcellularLocation>
</comment>
<comment type="similarity">
    <text evidence="4">Belongs to the complex I subunit 4L family.</text>
</comment>
<gene>
    <name type="primary">MT-ND4L</name>
    <name type="synonym">MTND4L</name>
    <name type="synonym">NADH4L</name>
    <name type="synonym">ND4L</name>
</gene>
<protein>
    <recommendedName>
        <fullName>NADH-ubiquinone oxidoreductase chain 4L</fullName>
        <ecNumber>7.1.1.2</ecNumber>
    </recommendedName>
    <alternativeName>
        <fullName>NADH dehydrogenase subunit 4L</fullName>
    </alternativeName>
</protein>
<accession>Q9XL36</accession>
<evidence type="ECO:0000250" key="1">
    <source>
        <dbReference type="UniProtKB" id="P03901"/>
    </source>
</evidence>
<evidence type="ECO:0000250" key="2">
    <source>
        <dbReference type="UniProtKB" id="P03902"/>
    </source>
</evidence>
<evidence type="ECO:0000255" key="3"/>
<evidence type="ECO:0000305" key="4"/>
<keyword id="KW-0249">Electron transport</keyword>
<keyword id="KW-0472">Membrane</keyword>
<keyword id="KW-0496">Mitochondrion</keyword>
<keyword id="KW-0999">Mitochondrion inner membrane</keyword>
<keyword id="KW-0520">NAD</keyword>
<keyword id="KW-0679">Respiratory chain</keyword>
<keyword id="KW-1278">Translocase</keyword>
<keyword id="KW-0812">Transmembrane</keyword>
<keyword id="KW-1133">Transmembrane helix</keyword>
<keyword id="KW-0813">Transport</keyword>
<keyword id="KW-0830">Ubiquinone</keyword>